<gene>
    <name evidence="5" type="primary">Lys2</name>
    <name type="ORF">I1G_00011514</name>
</gene>
<name>LYSM2_POCC1</name>
<accession>A0A4Q7K4T8</accession>
<proteinExistence type="evidence at transcript level"/>
<keyword id="KW-0147">Chitin-binding</keyword>
<keyword id="KW-0677">Repeat</keyword>
<keyword id="KW-0732">Signal</keyword>
<keyword id="KW-0843">Virulence</keyword>
<evidence type="ECO:0000255" key="1"/>
<evidence type="ECO:0000255" key="2">
    <source>
        <dbReference type="PROSITE-ProRule" id="PRU01118"/>
    </source>
</evidence>
<evidence type="ECO:0000256" key="3">
    <source>
        <dbReference type="SAM" id="MobiDB-lite"/>
    </source>
</evidence>
<evidence type="ECO:0000269" key="4">
    <source>
    </source>
</evidence>
<evidence type="ECO:0000303" key="5">
    <source>
    </source>
</evidence>
<evidence type="ECO:0000305" key="6"/>
<evidence type="ECO:0000305" key="7">
    <source>
    </source>
</evidence>
<comment type="function">
    <text evidence="7">Might have a role in sequestration of chitin oligosaccharides (breakdown products of fungal cell walls that are released during invasion and act as triggers of host immunity) to dampen host defense.</text>
</comment>
<comment type="induction">
    <text evidence="4">Expressed constitutively with no significant difference during colonization of banana roots.</text>
</comment>
<comment type="domain">
    <text evidence="7">The LysM (lysin motif) domains are small globular domains involved in binding chitin in eukaryotes. Lys2 contains one LysM domain.</text>
</comment>
<comment type="miscellaneous">
    <text evidence="6">In plants, chitin acts as a microbe-associated molecular pattern (MAMP) that is recognized by lysin motif (LysM)-containing plant cell surface-localized pattern recognition receptors (PRRs) that activate a plethora of downstream immune responses.</text>
</comment>
<comment type="similarity">
    <text evidence="6">Belongs to the secreted LysM effector family.</text>
</comment>
<organism>
    <name type="scientific">Pochonia chlamydosporia (strain 123)</name>
    <name type="common">Metacordyceps chlamydosporia</name>
    <dbReference type="NCBI Taxonomy" id="1052797"/>
    <lineage>
        <taxon>Eukaryota</taxon>
        <taxon>Fungi</taxon>
        <taxon>Dikarya</taxon>
        <taxon>Ascomycota</taxon>
        <taxon>Pezizomycotina</taxon>
        <taxon>Sordariomycetes</taxon>
        <taxon>Hypocreomycetidae</taxon>
        <taxon>Hypocreales</taxon>
        <taxon>Clavicipitaceae</taxon>
        <taxon>Pochonia</taxon>
    </lineage>
</organism>
<reference key="1">
    <citation type="journal article" date="2014" name="Fungal Genet. Biol.">
        <title>Sequencing and functional analysis of the genome of a nematode egg-parasitic fungus, Pochonia chlamydosporia.</title>
        <authorList>
            <person name="Larriba E."/>
            <person name="Jaime M.D."/>
            <person name="Carbonell-Caballero J."/>
            <person name="Conesa A."/>
            <person name="Dopazo J."/>
            <person name="Nislow C."/>
            <person name="Martin-Nieto J."/>
            <person name="Lopez-Llorca L.V."/>
        </authorList>
    </citation>
    <scope>NUCLEOTIDE SEQUENCE [LARGE SCALE GENOMIC DNA]</scope>
    <source>
        <strain>123</strain>
    </source>
</reference>
<reference key="2">
    <citation type="journal article" date="2021" name="Int. J. Mol. Sci.">
        <title>Putative LysM effectors contribute to fungal lifestyle.</title>
        <authorList>
            <person name="Suarez-Fernandez M."/>
            <person name="Aragon-Perez A."/>
            <person name="Lopez-Llorca L.V."/>
            <person name="Lopez-Moya F."/>
        </authorList>
    </citation>
    <scope>DOMAIN</scope>
    <scope>INDUCTION</scope>
</reference>
<feature type="signal peptide" evidence="1">
    <location>
        <begin position="1"/>
        <end position="22"/>
    </location>
</feature>
<feature type="chain" id="PRO_5020850194" description="Secreted LysM effector Lys2">
    <location>
        <begin position="23"/>
        <end position="377"/>
    </location>
</feature>
<feature type="domain" description="LysM 1" evidence="2">
    <location>
        <begin position="135"/>
        <end position="182"/>
    </location>
</feature>
<feature type="domain" description="LysM 2" evidence="2">
    <location>
        <begin position="207"/>
        <end position="253"/>
    </location>
</feature>
<feature type="region of interest" description="Disordered" evidence="3">
    <location>
        <begin position="104"/>
        <end position="124"/>
    </location>
</feature>
<feature type="compositionally biased region" description="Low complexity" evidence="3">
    <location>
        <begin position="104"/>
        <end position="119"/>
    </location>
</feature>
<sequence length="377" mass="41862">MVRQSIGLIALQLLNLVSVAQAATDAKRDLSEKPKMPYDPNTAADCTWWIDNDGSKNCEDIPEYWDIEMVDWLMWNPSLTLDCGNFLKGRSYCVEAKSVLPTQTSSSTATTTSQKPTATVSPLPQQDGLTKDCTKYYNVQSGDTCQKIVDQYMTFSLAEFNKWNPAVGPDCRSLFVGYYVCVGVPGTPTKPIGPSPTQPGIPKSCNKYYKADRGETCQGIADKHRLKLNDFYKWNPSVTNDCVGLWQGYYYCVGITPAFELKAFYHADCTGKLHGQTTIASGSDGACFDTNCQVASIDTFIVGDCPNGQVQISYWEQPGCTGKWFGYGYSSRGTCRKLWTEGWKFKAVHLRCASEKDDCVSKRTCTYDPEPSRGICM</sequence>
<protein>
    <recommendedName>
        <fullName evidence="5">Secreted LysM effector Lys2</fullName>
    </recommendedName>
    <alternativeName>
        <fullName evidence="5">LysM domain-containing protein 2</fullName>
    </alternativeName>
</protein>
<dbReference type="EMBL" id="AOSW02000332">
    <property type="protein sequence ID" value="RZR67276.1"/>
    <property type="molecule type" value="Genomic_DNA"/>
</dbReference>
<dbReference type="SMR" id="A0A4Q7K4T8"/>
<dbReference type="STRING" id="1052797.A0A4Q7K4T8"/>
<dbReference type="GO" id="GO:0008061">
    <property type="term" value="F:chitin binding"/>
    <property type="evidence" value="ECO:0007669"/>
    <property type="project" value="UniProtKB-KW"/>
</dbReference>
<dbReference type="CDD" id="cd00118">
    <property type="entry name" value="LysM"/>
    <property type="match status" value="2"/>
</dbReference>
<dbReference type="Gene3D" id="3.10.350.10">
    <property type="entry name" value="LysM domain"/>
    <property type="match status" value="2"/>
</dbReference>
<dbReference type="InterPro" id="IPR052210">
    <property type="entry name" value="LysM1-like"/>
</dbReference>
<dbReference type="InterPro" id="IPR018392">
    <property type="entry name" value="LysM_dom"/>
</dbReference>
<dbReference type="InterPro" id="IPR036779">
    <property type="entry name" value="LysM_dom_sf"/>
</dbReference>
<dbReference type="PANTHER" id="PTHR34997">
    <property type="entry name" value="AM15"/>
    <property type="match status" value="1"/>
</dbReference>
<dbReference type="PANTHER" id="PTHR34997:SF1">
    <property type="entry name" value="PEPTIDOGLYCAN-BINDING LYSIN DOMAIN"/>
    <property type="match status" value="1"/>
</dbReference>
<dbReference type="Pfam" id="PF01476">
    <property type="entry name" value="LysM"/>
    <property type="match status" value="2"/>
</dbReference>
<dbReference type="SMART" id="SM00257">
    <property type="entry name" value="LysM"/>
    <property type="match status" value="2"/>
</dbReference>
<dbReference type="SUPFAM" id="SSF54106">
    <property type="entry name" value="LysM domain"/>
    <property type="match status" value="2"/>
</dbReference>
<dbReference type="PROSITE" id="PS51782">
    <property type="entry name" value="LYSM"/>
    <property type="match status" value="2"/>
</dbReference>